<accession>Q5N636</accession>
<proteinExistence type="inferred from homology"/>
<keyword id="KW-0067">ATP-binding</keyword>
<keyword id="KW-0460">Magnesium</keyword>
<keyword id="KW-0464">Manganese</keyword>
<keyword id="KW-0479">Metal-binding</keyword>
<keyword id="KW-0547">Nucleotide-binding</keyword>
<keyword id="KW-0548">Nucleotidyltransferase</keyword>
<keyword id="KW-0808">Transferase</keyword>
<evidence type="ECO:0000255" key="1">
    <source>
        <dbReference type="HAMAP-Rule" id="MF_00692"/>
    </source>
</evidence>
<feature type="chain" id="PRO_0000271874" description="Protein nucleotidyltransferase YdiU">
    <location>
        <begin position="1"/>
        <end position="492"/>
    </location>
</feature>
<feature type="active site" description="Proton acceptor" evidence="1">
    <location>
        <position position="256"/>
    </location>
</feature>
<feature type="binding site" evidence="1">
    <location>
        <position position="91"/>
    </location>
    <ligand>
        <name>ATP</name>
        <dbReference type="ChEBI" id="CHEBI:30616"/>
    </ligand>
</feature>
<feature type="binding site" evidence="1">
    <location>
        <position position="93"/>
    </location>
    <ligand>
        <name>ATP</name>
        <dbReference type="ChEBI" id="CHEBI:30616"/>
    </ligand>
</feature>
<feature type="binding site" evidence="1">
    <location>
        <position position="94"/>
    </location>
    <ligand>
        <name>ATP</name>
        <dbReference type="ChEBI" id="CHEBI:30616"/>
    </ligand>
</feature>
<feature type="binding site" evidence="1">
    <location>
        <position position="114"/>
    </location>
    <ligand>
        <name>ATP</name>
        <dbReference type="ChEBI" id="CHEBI:30616"/>
    </ligand>
</feature>
<feature type="binding site" evidence="1">
    <location>
        <position position="126"/>
    </location>
    <ligand>
        <name>ATP</name>
        <dbReference type="ChEBI" id="CHEBI:30616"/>
    </ligand>
</feature>
<feature type="binding site" evidence="1">
    <location>
        <position position="127"/>
    </location>
    <ligand>
        <name>ATP</name>
        <dbReference type="ChEBI" id="CHEBI:30616"/>
    </ligand>
</feature>
<feature type="binding site" evidence="1">
    <location>
        <position position="180"/>
    </location>
    <ligand>
        <name>ATP</name>
        <dbReference type="ChEBI" id="CHEBI:30616"/>
    </ligand>
</feature>
<feature type="binding site" evidence="1">
    <location>
        <position position="187"/>
    </location>
    <ligand>
        <name>ATP</name>
        <dbReference type="ChEBI" id="CHEBI:30616"/>
    </ligand>
</feature>
<feature type="binding site" evidence="1">
    <location>
        <position position="257"/>
    </location>
    <ligand>
        <name>Mg(2+)</name>
        <dbReference type="ChEBI" id="CHEBI:18420"/>
    </ligand>
</feature>
<feature type="binding site" evidence="1">
    <location>
        <position position="266"/>
    </location>
    <ligand>
        <name>ATP</name>
        <dbReference type="ChEBI" id="CHEBI:30616"/>
    </ligand>
</feature>
<feature type="binding site" evidence="1">
    <location>
        <position position="266"/>
    </location>
    <ligand>
        <name>Mg(2+)</name>
        <dbReference type="ChEBI" id="CHEBI:18420"/>
    </ligand>
</feature>
<dbReference type="EC" id="2.7.7.-" evidence="1"/>
<dbReference type="EC" id="2.7.7.108" evidence="1"/>
<dbReference type="EMBL" id="AP008231">
    <property type="protein sequence ID" value="BAD78231.1"/>
    <property type="molecule type" value="Genomic_DNA"/>
</dbReference>
<dbReference type="RefSeq" id="WP_011242354.1">
    <property type="nucleotide sequence ID" value="NC_006576.1"/>
</dbReference>
<dbReference type="SMR" id="Q5N636"/>
<dbReference type="KEGG" id="syc:syc0041_c"/>
<dbReference type="eggNOG" id="COG0397">
    <property type="taxonomic scope" value="Bacteria"/>
</dbReference>
<dbReference type="Proteomes" id="UP000001175">
    <property type="component" value="Chromosome"/>
</dbReference>
<dbReference type="GO" id="GO:0070733">
    <property type="term" value="F:AMPylase activity"/>
    <property type="evidence" value="ECO:0007669"/>
    <property type="project" value="RHEA"/>
</dbReference>
<dbReference type="GO" id="GO:0005524">
    <property type="term" value="F:ATP binding"/>
    <property type="evidence" value="ECO:0007669"/>
    <property type="project" value="UniProtKB-UniRule"/>
</dbReference>
<dbReference type="GO" id="GO:0000287">
    <property type="term" value="F:magnesium ion binding"/>
    <property type="evidence" value="ECO:0007669"/>
    <property type="project" value="UniProtKB-UniRule"/>
</dbReference>
<dbReference type="HAMAP" id="MF_00692">
    <property type="entry name" value="YdiU_SelO"/>
    <property type="match status" value="1"/>
</dbReference>
<dbReference type="InterPro" id="IPR003846">
    <property type="entry name" value="SelO"/>
</dbReference>
<dbReference type="NCBIfam" id="NF000658">
    <property type="entry name" value="PRK00029.1"/>
    <property type="match status" value="1"/>
</dbReference>
<dbReference type="PANTHER" id="PTHR32057">
    <property type="entry name" value="PROTEIN ADENYLYLTRANSFERASE SELO, MITOCHONDRIAL"/>
    <property type="match status" value="1"/>
</dbReference>
<dbReference type="PANTHER" id="PTHR32057:SF14">
    <property type="entry name" value="PROTEIN ADENYLYLTRANSFERASE SELO, MITOCHONDRIAL"/>
    <property type="match status" value="1"/>
</dbReference>
<dbReference type="Pfam" id="PF02696">
    <property type="entry name" value="SelO"/>
    <property type="match status" value="1"/>
</dbReference>
<sequence length="492" mass="55533">MPSTNPFLTLPYEPAFASLGSEFSDPVEAATFPAHQLRFRNDRLLPILGLDPATVADEHFIEAFGRFQGRSPLLAMRYHGYQFGIYSPDLGDGRGFLYGQVRGRNGWLYDFGTKGSGRTPYSRGGDGKPTLKGGVREVLASEFLQRLGVRTGRCLSLIETGEELWRGDEPSPTRSSVMVRFNRTHIRFGTFERLHYFKRADLVRQLLDHVIATYYSHLLGDPEADAKFYAELTERTADLAAQWMAAGFCHAVLNTDNLSIVGESFDYGPWAFLDRFDPKFTAAYFDHSGRYRYENQPGICQLNLELLQVPLGMVMSAADLEAGIAGFGDRYQATYSRLMLRRLGFEADQLHSAIADDLIITTLQLLLRAPIGYNEFFARLRAQFQPSWRSDLSAILPDWITTDLEALPEAQWQGWRDRYHQLLTHLPESQLPLIQQQLAQANPEISPIRPVVESVWDPIAIDDNWEPLEALLNRWRHDGDGAADGAVVPNAN</sequence>
<comment type="function">
    <text evidence="1">Nucleotidyltransferase involved in the post-translational modification of proteins. It can catalyze the addition of adenosine monophosphate (AMP) or uridine monophosphate (UMP) to a protein, resulting in modifications known as AMPylation and UMPylation.</text>
</comment>
<comment type="catalytic activity">
    <reaction evidence="1">
        <text>L-seryl-[protein] + ATP = 3-O-(5'-adenylyl)-L-seryl-[protein] + diphosphate</text>
        <dbReference type="Rhea" id="RHEA:58120"/>
        <dbReference type="Rhea" id="RHEA-COMP:9863"/>
        <dbReference type="Rhea" id="RHEA-COMP:15073"/>
        <dbReference type="ChEBI" id="CHEBI:29999"/>
        <dbReference type="ChEBI" id="CHEBI:30616"/>
        <dbReference type="ChEBI" id="CHEBI:33019"/>
        <dbReference type="ChEBI" id="CHEBI:142516"/>
        <dbReference type="EC" id="2.7.7.108"/>
    </reaction>
</comment>
<comment type="catalytic activity">
    <reaction evidence="1">
        <text>L-threonyl-[protein] + ATP = 3-O-(5'-adenylyl)-L-threonyl-[protein] + diphosphate</text>
        <dbReference type="Rhea" id="RHEA:54292"/>
        <dbReference type="Rhea" id="RHEA-COMP:11060"/>
        <dbReference type="Rhea" id="RHEA-COMP:13847"/>
        <dbReference type="ChEBI" id="CHEBI:30013"/>
        <dbReference type="ChEBI" id="CHEBI:30616"/>
        <dbReference type="ChEBI" id="CHEBI:33019"/>
        <dbReference type="ChEBI" id="CHEBI:138113"/>
        <dbReference type="EC" id="2.7.7.108"/>
    </reaction>
</comment>
<comment type="catalytic activity">
    <reaction evidence="1">
        <text>L-tyrosyl-[protein] + ATP = O-(5'-adenylyl)-L-tyrosyl-[protein] + diphosphate</text>
        <dbReference type="Rhea" id="RHEA:54288"/>
        <dbReference type="Rhea" id="RHEA-COMP:10136"/>
        <dbReference type="Rhea" id="RHEA-COMP:13846"/>
        <dbReference type="ChEBI" id="CHEBI:30616"/>
        <dbReference type="ChEBI" id="CHEBI:33019"/>
        <dbReference type="ChEBI" id="CHEBI:46858"/>
        <dbReference type="ChEBI" id="CHEBI:83624"/>
        <dbReference type="EC" id="2.7.7.108"/>
    </reaction>
</comment>
<comment type="catalytic activity">
    <reaction evidence="1">
        <text>L-histidyl-[protein] + UTP = N(tele)-(5'-uridylyl)-L-histidyl-[protein] + diphosphate</text>
        <dbReference type="Rhea" id="RHEA:83891"/>
        <dbReference type="Rhea" id="RHEA-COMP:9745"/>
        <dbReference type="Rhea" id="RHEA-COMP:20239"/>
        <dbReference type="ChEBI" id="CHEBI:29979"/>
        <dbReference type="ChEBI" id="CHEBI:33019"/>
        <dbReference type="ChEBI" id="CHEBI:46398"/>
        <dbReference type="ChEBI" id="CHEBI:233474"/>
    </reaction>
</comment>
<comment type="catalytic activity">
    <reaction evidence="1">
        <text>L-seryl-[protein] + UTP = O-(5'-uridylyl)-L-seryl-[protein] + diphosphate</text>
        <dbReference type="Rhea" id="RHEA:64604"/>
        <dbReference type="Rhea" id="RHEA-COMP:9863"/>
        <dbReference type="Rhea" id="RHEA-COMP:16635"/>
        <dbReference type="ChEBI" id="CHEBI:29999"/>
        <dbReference type="ChEBI" id="CHEBI:33019"/>
        <dbReference type="ChEBI" id="CHEBI:46398"/>
        <dbReference type="ChEBI" id="CHEBI:156051"/>
    </reaction>
</comment>
<comment type="catalytic activity">
    <reaction evidence="1">
        <text>L-tyrosyl-[protein] + UTP = O-(5'-uridylyl)-L-tyrosyl-[protein] + diphosphate</text>
        <dbReference type="Rhea" id="RHEA:83887"/>
        <dbReference type="Rhea" id="RHEA-COMP:10136"/>
        <dbReference type="Rhea" id="RHEA-COMP:20238"/>
        <dbReference type="ChEBI" id="CHEBI:33019"/>
        <dbReference type="ChEBI" id="CHEBI:46398"/>
        <dbReference type="ChEBI" id="CHEBI:46858"/>
        <dbReference type="ChEBI" id="CHEBI:90602"/>
    </reaction>
</comment>
<comment type="cofactor">
    <cofactor evidence="1">
        <name>Mg(2+)</name>
        <dbReference type="ChEBI" id="CHEBI:18420"/>
    </cofactor>
    <cofactor evidence="1">
        <name>Mn(2+)</name>
        <dbReference type="ChEBI" id="CHEBI:29035"/>
    </cofactor>
</comment>
<comment type="similarity">
    <text evidence="1">Belongs to the SELO family.</text>
</comment>
<protein>
    <recommendedName>
        <fullName evidence="1">Protein nucleotidyltransferase YdiU</fullName>
        <ecNumber evidence="1">2.7.7.-</ecNumber>
    </recommendedName>
    <alternativeName>
        <fullName evidence="1">Protein adenylyltransferase YdiU</fullName>
        <ecNumber evidence="1">2.7.7.108</ecNumber>
    </alternativeName>
    <alternativeName>
        <fullName evidence="1">Protein uridylyltransferase YdiU</fullName>
        <ecNumber evidence="1">2.7.7.-</ecNumber>
    </alternativeName>
</protein>
<gene>
    <name evidence="1" type="primary">ydiU</name>
    <name evidence="1" type="synonym">selO</name>
    <name type="ordered locus">syc0041_c</name>
</gene>
<organism>
    <name type="scientific">Synechococcus sp. (strain ATCC 27144 / PCC 6301 / SAUG 1402/1)</name>
    <name type="common">Anacystis nidulans</name>
    <dbReference type="NCBI Taxonomy" id="269084"/>
    <lineage>
        <taxon>Bacteria</taxon>
        <taxon>Bacillati</taxon>
        <taxon>Cyanobacteriota</taxon>
        <taxon>Cyanophyceae</taxon>
        <taxon>Synechococcales</taxon>
        <taxon>Synechococcaceae</taxon>
        <taxon>Synechococcus</taxon>
    </lineage>
</organism>
<name>SELO_SYNP6</name>
<reference key="1">
    <citation type="journal article" date="2007" name="Photosyn. Res.">
        <title>Complete nucleotide sequence of the freshwater unicellular cyanobacterium Synechococcus elongatus PCC 6301 chromosome: gene content and organization.</title>
        <authorList>
            <person name="Sugita C."/>
            <person name="Ogata K."/>
            <person name="Shikata M."/>
            <person name="Jikuya H."/>
            <person name="Takano J."/>
            <person name="Furumichi M."/>
            <person name="Kanehisa M."/>
            <person name="Omata T."/>
            <person name="Sugiura M."/>
            <person name="Sugita M."/>
        </authorList>
    </citation>
    <scope>NUCLEOTIDE SEQUENCE [LARGE SCALE GENOMIC DNA]</scope>
    <source>
        <strain>ATCC 27144 / PCC 6301 / SAUG 1402/1</strain>
    </source>
</reference>